<dbReference type="EMBL" id="AE010301">
    <property type="protein sequence ID" value="AAN51709.1"/>
    <property type="molecule type" value="Genomic_DNA"/>
</dbReference>
<dbReference type="RefSeq" id="NP_714694.1">
    <property type="nucleotide sequence ID" value="NC_004343.2"/>
</dbReference>
<dbReference type="STRING" id="189518.LB_150"/>
<dbReference type="PaxDb" id="189518-LB_150"/>
<dbReference type="EnsemblBacteria" id="AAN51709">
    <property type="protein sequence ID" value="AAN51709"/>
    <property type="gene ID" value="LB_150"/>
</dbReference>
<dbReference type="KEGG" id="lil:LB_150"/>
<dbReference type="PATRIC" id="fig|189518.3.peg.4478"/>
<dbReference type="HOGENOM" id="CLU_054212_0_0_12"/>
<dbReference type="InParanoid" id="Q8EXQ8"/>
<dbReference type="OrthoDB" id="9811967at2"/>
<dbReference type="UniPathway" id="UPA00148"/>
<dbReference type="Proteomes" id="UP000001408">
    <property type="component" value="Chromosome II"/>
</dbReference>
<dbReference type="GO" id="GO:0005886">
    <property type="term" value="C:plasma membrane"/>
    <property type="evidence" value="ECO:0007669"/>
    <property type="project" value="UniProtKB-SubCell"/>
</dbReference>
<dbReference type="GO" id="GO:0015420">
    <property type="term" value="F:ABC-type vitamin B12 transporter activity"/>
    <property type="evidence" value="ECO:0007669"/>
    <property type="project" value="UniProtKB-UniRule"/>
</dbReference>
<dbReference type="GO" id="GO:0048472">
    <property type="term" value="F:threonine-phosphate decarboxylase activity"/>
    <property type="evidence" value="ECO:0007669"/>
    <property type="project" value="InterPro"/>
</dbReference>
<dbReference type="GO" id="GO:0009236">
    <property type="term" value="P:cobalamin biosynthetic process"/>
    <property type="evidence" value="ECO:0007669"/>
    <property type="project" value="UniProtKB-UniRule"/>
</dbReference>
<dbReference type="HAMAP" id="MF_00024">
    <property type="entry name" value="CobD_CbiB"/>
    <property type="match status" value="1"/>
</dbReference>
<dbReference type="InterPro" id="IPR004485">
    <property type="entry name" value="Cobalamin_biosynth_CobD/CbiB"/>
</dbReference>
<dbReference type="NCBIfam" id="TIGR00380">
    <property type="entry name" value="cobal_cbiB"/>
    <property type="match status" value="1"/>
</dbReference>
<dbReference type="PANTHER" id="PTHR34308">
    <property type="entry name" value="COBALAMIN BIOSYNTHESIS PROTEIN CBIB"/>
    <property type="match status" value="1"/>
</dbReference>
<dbReference type="PANTHER" id="PTHR34308:SF1">
    <property type="entry name" value="COBALAMIN BIOSYNTHESIS PROTEIN CBIB"/>
    <property type="match status" value="1"/>
</dbReference>
<dbReference type="Pfam" id="PF03186">
    <property type="entry name" value="CobD_Cbib"/>
    <property type="match status" value="1"/>
</dbReference>
<name>COBD_LEPIN</name>
<proteinExistence type="inferred from homology"/>
<feature type="chain" id="PRO_0000150928" description="Cobalamin biosynthesis protein CobD">
    <location>
        <begin position="1"/>
        <end position="315"/>
    </location>
</feature>
<feature type="transmembrane region" description="Helical" evidence="1">
    <location>
        <begin position="48"/>
        <end position="70"/>
    </location>
</feature>
<feature type="transmembrane region" description="Helical" evidence="1">
    <location>
        <begin position="75"/>
        <end position="94"/>
    </location>
</feature>
<feature type="transmembrane region" description="Helical" evidence="1">
    <location>
        <begin position="148"/>
        <end position="170"/>
    </location>
</feature>
<feature type="transmembrane region" description="Helical" evidence="1">
    <location>
        <begin position="208"/>
        <end position="230"/>
    </location>
</feature>
<feature type="transmembrane region" description="Helical" evidence="1">
    <location>
        <begin position="292"/>
        <end position="314"/>
    </location>
</feature>
<accession>Q8EXQ8</accession>
<protein>
    <recommendedName>
        <fullName evidence="1">Cobalamin biosynthesis protein CobD</fullName>
    </recommendedName>
</protein>
<evidence type="ECO:0000255" key="1">
    <source>
        <dbReference type="HAMAP-Rule" id="MF_00024"/>
    </source>
</evidence>
<sequence length="315" mass="35179">MPWGIAISILVDLILGDPKDLPHPVRAIGKLARALEKFFRNNCSSEEIAGILTSCLVYLISFIIPFLSVQFANQLHWILGELLSIMIIYTTIAIRDMIDHSKEVYDALVQTNLPLARKKVSKIVARDTENLSESEIIRACVESTAENLVDGITTPLFYAVFGGPAWAMLYRSINTLDSLFGYKNKKYLRFGSFPARIDDLANYLPARITSYILVLSSLFLGYNFKNSLYILQRDGKKHPSPNSGLTEAAVAGALEIQLGGVNLYSGVQNIKPKLGDPKKEFQIEQILQTNKLILLSSILTFIFYILIYSGAAYFL</sequence>
<reference key="1">
    <citation type="journal article" date="2003" name="Nature">
        <title>Unique physiological and pathogenic features of Leptospira interrogans revealed by whole-genome sequencing.</title>
        <authorList>
            <person name="Ren S.-X."/>
            <person name="Fu G."/>
            <person name="Jiang X.-G."/>
            <person name="Zeng R."/>
            <person name="Miao Y.-G."/>
            <person name="Xu H."/>
            <person name="Zhang Y.-X."/>
            <person name="Xiong H."/>
            <person name="Lu G."/>
            <person name="Lu L.-F."/>
            <person name="Jiang H.-Q."/>
            <person name="Jia J."/>
            <person name="Tu Y.-F."/>
            <person name="Jiang J.-X."/>
            <person name="Gu W.-Y."/>
            <person name="Zhang Y.-Q."/>
            <person name="Cai Z."/>
            <person name="Sheng H.-H."/>
            <person name="Yin H.-F."/>
            <person name="Zhang Y."/>
            <person name="Zhu G.-F."/>
            <person name="Wan M."/>
            <person name="Huang H.-L."/>
            <person name="Qian Z."/>
            <person name="Wang S.-Y."/>
            <person name="Ma W."/>
            <person name="Yao Z.-J."/>
            <person name="Shen Y."/>
            <person name="Qiang B.-Q."/>
            <person name="Xia Q.-C."/>
            <person name="Guo X.-K."/>
            <person name="Danchin A."/>
            <person name="Saint Girons I."/>
            <person name="Somerville R.L."/>
            <person name="Wen Y.-M."/>
            <person name="Shi M.-H."/>
            <person name="Chen Z."/>
            <person name="Xu J.-G."/>
            <person name="Zhao G.-P."/>
        </authorList>
    </citation>
    <scope>NUCLEOTIDE SEQUENCE [LARGE SCALE GENOMIC DNA]</scope>
    <source>
        <strain>56601</strain>
    </source>
</reference>
<gene>
    <name evidence="1" type="primary">cobD</name>
    <name type="ordered locus">LB_150</name>
</gene>
<keyword id="KW-1003">Cell membrane</keyword>
<keyword id="KW-0169">Cobalamin biosynthesis</keyword>
<keyword id="KW-0472">Membrane</keyword>
<keyword id="KW-1185">Reference proteome</keyword>
<keyword id="KW-0812">Transmembrane</keyword>
<keyword id="KW-1133">Transmembrane helix</keyword>
<comment type="function">
    <text evidence="1">Converts cobyric acid to cobinamide by the addition of aminopropanol on the F carboxylic group.</text>
</comment>
<comment type="pathway">
    <text evidence="1">Cofactor biosynthesis; adenosylcobalamin biosynthesis.</text>
</comment>
<comment type="subcellular location">
    <subcellularLocation>
        <location evidence="1">Cell membrane</location>
        <topology evidence="1">Multi-pass membrane protein</topology>
    </subcellularLocation>
</comment>
<comment type="similarity">
    <text evidence="1">Belongs to the CobD/CbiB family.</text>
</comment>
<organism>
    <name type="scientific">Leptospira interrogans serogroup Icterohaemorrhagiae serovar Lai (strain 56601)</name>
    <dbReference type="NCBI Taxonomy" id="189518"/>
    <lineage>
        <taxon>Bacteria</taxon>
        <taxon>Pseudomonadati</taxon>
        <taxon>Spirochaetota</taxon>
        <taxon>Spirochaetia</taxon>
        <taxon>Leptospirales</taxon>
        <taxon>Leptospiraceae</taxon>
        <taxon>Leptospira</taxon>
    </lineage>
</organism>